<gene>
    <name evidence="1" type="primary">tyrS</name>
    <name type="ordered locus">APH_1244</name>
</gene>
<name>SYY_ANAPZ</name>
<reference key="1">
    <citation type="journal article" date="2006" name="PLoS Genet.">
        <title>Comparative genomics of emerging human ehrlichiosis agents.</title>
        <authorList>
            <person name="Dunning Hotopp J.C."/>
            <person name="Lin M."/>
            <person name="Madupu R."/>
            <person name="Crabtree J."/>
            <person name="Angiuoli S.V."/>
            <person name="Eisen J.A."/>
            <person name="Seshadri R."/>
            <person name="Ren Q."/>
            <person name="Wu M."/>
            <person name="Utterback T.R."/>
            <person name="Smith S."/>
            <person name="Lewis M."/>
            <person name="Khouri H."/>
            <person name="Zhang C."/>
            <person name="Niu H."/>
            <person name="Lin Q."/>
            <person name="Ohashi N."/>
            <person name="Zhi N."/>
            <person name="Nelson W.C."/>
            <person name="Brinkac L.M."/>
            <person name="Dodson R.J."/>
            <person name="Rosovitz M.J."/>
            <person name="Sundaram J.P."/>
            <person name="Daugherty S.C."/>
            <person name="Davidsen T."/>
            <person name="Durkin A.S."/>
            <person name="Gwinn M.L."/>
            <person name="Haft D.H."/>
            <person name="Selengut J.D."/>
            <person name="Sullivan S.A."/>
            <person name="Zafar N."/>
            <person name="Zhou L."/>
            <person name="Benahmed F."/>
            <person name="Forberger H."/>
            <person name="Halpin R."/>
            <person name="Mulligan S."/>
            <person name="Robinson J."/>
            <person name="White O."/>
            <person name="Rikihisa Y."/>
            <person name="Tettelin H."/>
        </authorList>
    </citation>
    <scope>NUCLEOTIDE SEQUENCE [LARGE SCALE GENOMIC DNA]</scope>
    <source>
        <strain>HZ</strain>
    </source>
</reference>
<sequence length="412" mass="45726">MEFNSEFLATLCARGYLHQLTDATALDGIMSSGAVTAYIGFDCTANSLHIGSLMQIMLLRYLQRFGHKPIVLLGGATTKVGDPSGKEKTRAMLSEDNISANKEGILRVIKKFLSEDVVVVDNAEWLGNYGYLDFLREIGSKFSVNVMLGLESVKSRLSRDQQLSFLEFSYVLLQSYDFVELHKRYGCILQIGGSDQWGNIVSGIDLARKMGCPQLYGVTTPLLLNSSGAKMGKTADGAIWLDETLYSPYNYWQYFRNVPDQDVGRLLRLFTELPLSEIERLEALKGEELNEAKKILATAVTSICHGAEVALQVENQALKVFEHNDHDELRSITFSRKTLGQGIPISKLLHMWGLEESISAGRRLIRGGGCKINGGVVLDEEKLLNCGDFDDNGGYVAVFCGKKRRLKVVLED</sequence>
<evidence type="ECO:0000255" key="1">
    <source>
        <dbReference type="HAMAP-Rule" id="MF_02006"/>
    </source>
</evidence>
<accession>Q2GIN1</accession>
<keyword id="KW-0030">Aminoacyl-tRNA synthetase</keyword>
<keyword id="KW-0067">ATP-binding</keyword>
<keyword id="KW-0963">Cytoplasm</keyword>
<keyword id="KW-0436">Ligase</keyword>
<keyword id="KW-0547">Nucleotide-binding</keyword>
<keyword id="KW-0648">Protein biosynthesis</keyword>
<keyword id="KW-0694">RNA-binding</keyword>
<proteinExistence type="inferred from homology"/>
<feature type="chain" id="PRO_1000088575" description="Tyrosine--tRNA ligase">
    <location>
        <begin position="1"/>
        <end position="412"/>
    </location>
</feature>
<feature type="domain" description="S4 RNA-binding" evidence="1">
    <location>
        <begin position="343"/>
        <end position="409"/>
    </location>
</feature>
<feature type="short sequence motif" description="'HIGH' region">
    <location>
        <begin position="43"/>
        <end position="52"/>
    </location>
</feature>
<feature type="short sequence motif" description="'KMSKS' region">
    <location>
        <begin position="230"/>
        <end position="234"/>
    </location>
</feature>
<feature type="binding site" evidence="1">
    <location>
        <position position="38"/>
    </location>
    <ligand>
        <name>L-tyrosine</name>
        <dbReference type="ChEBI" id="CHEBI:58315"/>
    </ligand>
</feature>
<feature type="binding site" evidence="1">
    <location>
        <position position="170"/>
    </location>
    <ligand>
        <name>L-tyrosine</name>
        <dbReference type="ChEBI" id="CHEBI:58315"/>
    </ligand>
</feature>
<feature type="binding site" evidence="1">
    <location>
        <position position="174"/>
    </location>
    <ligand>
        <name>L-tyrosine</name>
        <dbReference type="ChEBI" id="CHEBI:58315"/>
    </ligand>
</feature>
<feature type="binding site" evidence="1">
    <location>
        <position position="233"/>
    </location>
    <ligand>
        <name>ATP</name>
        <dbReference type="ChEBI" id="CHEBI:30616"/>
    </ligand>
</feature>
<dbReference type="EC" id="6.1.1.1" evidence="1"/>
<dbReference type="EMBL" id="CP000235">
    <property type="protein sequence ID" value="ABD43829.1"/>
    <property type="molecule type" value="Genomic_DNA"/>
</dbReference>
<dbReference type="RefSeq" id="WP_011451277.1">
    <property type="nucleotide sequence ID" value="NC_007797.1"/>
</dbReference>
<dbReference type="SMR" id="Q2GIN1"/>
<dbReference type="STRING" id="212042.APH_1244"/>
<dbReference type="PaxDb" id="212042-APH_1244"/>
<dbReference type="EnsemblBacteria" id="ABD43829">
    <property type="protein sequence ID" value="ABD43829"/>
    <property type="gene ID" value="APH_1244"/>
</dbReference>
<dbReference type="GeneID" id="92747870"/>
<dbReference type="KEGG" id="aph:APH_1244"/>
<dbReference type="PATRIC" id="fig|212042.8.peg.1336"/>
<dbReference type="eggNOG" id="COG0162">
    <property type="taxonomic scope" value="Bacteria"/>
</dbReference>
<dbReference type="HOGENOM" id="CLU_024003_0_3_5"/>
<dbReference type="Proteomes" id="UP000001943">
    <property type="component" value="Chromosome"/>
</dbReference>
<dbReference type="GO" id="GO:0005829">
    <property type="term" value="C:cytosol"/>
    <property type="evidence" value="ECO:0007669"/>
    <property type="project" value="TreeGrafter"/>
</dbReference>
<dbReference type="GO" id="GO:0005524">
    <property type="term" value="F:ATP binding"/>
    <property type="evidence" value="ECO:0007669"/>
    <property type="project" value="UniProtKB-UniRule"/>
</dbReference>
<dbReference type="GO" id="GO:0003723">
    <property type="term" value="F:RNA binding"/>
    <property type="evidence" value="ECO:0007669"/>
    <property type="project" value="UniProtKB-KW"/>
</dbReference>
<dbReference type="GO" id="GO:0004831">
    <property type="term" value="F:tyrosine-tRNA ligase activity"/>
    <property type="evidence" value="ECO:0007669"/>
    <property type="project" value="UniProtKB-UniRule"/>
</dbReference>
<dbReference type="GO" id="GO:0006437">
    <property type="term" value="P:tyrosyl-tRNA aminoacylation"/>
    <property type="evidence" value="ECO:0007669"/>
    <property type="project" value="UniProtKB-UniRule"/>
</dbReference>
<dbReference type="CDD" id="cd00165">
    <property type="entry name" value="S4"/>
    <property type="match status" value="1"/>
</dbReference>
<dbReference type="CDD" id="cd00805">
    <property type="entry name" value="TyrRS_core"/>
    <property type="match status" value="1"/>
</dbReference>
<dbReference type="FunFam" id="1.10.240.10:FF:000001">
    <property type="entry name" value="Tyrosine--tRNA ligase"/>
    <property type="match status" value="1"/>
</dbReference>
<dbReference type="Gene3D" id="3.40.50.620">
    <property type="entry name" value="HUPs"/>
    <property type="match status" value="1"/>
</dbReference>
<dbReference type="Gene3D" id="3.10.290.10">
    <property type="entry name" value="RNA-binding S4 domain"/>
    <property type="match status" value="1"/>
</dbReference>
<dbReference type="Gene3D" id="1.10.240.10">
    <property type="entry name" value="Tyrosyl-Transfer RNA Synthetase"/>
    <property type="match status" value="1"/>
</dbReference>
<dbReference type="HAMAP" id="MF_02006">
    <property type="entry name" value="Tyr_tRNA_synth_type1"/>
    <property type="match status" value="1"/>
</dbReference>
<dbReference type="InterPro" id="IPR002305">
    <property type="entry name" value="aa-tRNA-synth_Ic"/>
</dbReference>
<dbReference type="InterPro" id="IPR014729">
    <property type="entry name" value="Rossmann-like_a/b/a_fold"/>
</dbReference>
<dbReference type="InterPro" id="IPR036986">
    <property type="entry name" value="S4_RNA-bd_sf"/>
</dbReference>
<dbReference type="InterPro" id="IPR002307">
    <property type="entry name" value="Tyr-tRNA-ligase"/>
</dbReference>
<dbReference type="InterPro" id="IPR024088">
    <property type="entry name" value="Tyr-tRNA-ligase_bac-type"/>
</dbReference>
<dbReference type="InterPro" id="IPR024107">
    <property type="entry name" value="Tyr-tRNA-ligase_bac_1"/>
</dbReference>
<dbReference type="NCBIfam" id="TIGR00234">
    <property type="entry name" value="tyrS"/>
    <property type="match status" value="1"/>
</dbReference>
<dbReference type="PANTHER" id="PTHR11766:SF0">
    <property type="entry name" value="TYROSINE--TRNA LIGASE, MITOCHONDRIAL"/>
    <property type="match status" value="1"/>
</dbReference>
<dbReference type="PANTHER" id="PTHR11766">
    <property type="entry name" value="TYROSYL-TRNA SYNTHETASE"/>
    <property type="match status" value="1"/>
</dbReference>
<dbReference type="Pfam" id="PF00579">
    <property type="entry name" value="tRNA-synt_1b"/>
    <property type="match status" value="1"/>
</dbReference>
<dbReference type="PRINTS" id="PR01040">
    <property type="entry name" value="TRNASYNTHTYR"/>
</dbReference>
<dbReference type="SUPFAM" id="SSF55174">
    <property type="entry name" value="Alpha-L RNA-binding motif"/>
    <property type="match status" value="1"/>
</dbReference>
<dbReference type="SUPFAM" id="SSF52374">
    <property type="entry name" value="Nucleotidylyl transferase"/>
    <property type="match status" value="1"/>
</dbReference>
<dbReference type="PROSITE" id="PS50889">
    <property type="entry name" value="S4"/>
    <property type="match status" value="1"/>
</dbReference>
<protein>
    <recommendedName>
        <fullName evidence="1">Tyrosine--tRNA ligase</fullName>
        <ecNumber evidence="1">6.1.1.1</ecNumber>
    </recommendedName>
    <alternativeName>
        <fullName evidence="1">Tyrosyl-tRNA synthetase</fullName>
        <shortName evidence="1">TyrRS</shortName>
    </alternativeName>
</protein>
<organism>
    <name type="scientific">Anaplasma phagocytophilum (strain HZ)</name>
    <dbReference type="NCBI Taxonomy" id="212042"/>
    <lineage>
        <taxon>Bacteria</taxon>
        <taxon>Pseudomonadati</taxon>
        <taxon>Pseudomonadota</taxon>
        <taxon>Alphaproteobacteria</taxon>
        <taxon>Rickettsiales</taxon>
        <taxon>Anaplasmataceae</taxon>
        <taxon>Anaplasma</taxon>
        <taxon>phagocytophilum group</taxon>
    </lineage>
</organism>
<comment type="function">
    <text evidence="1">Catalyzes the attachment of tyrosine to tRNA(Tyr) in a two-step reaction: tyrosine is first activated by ATP to form Tyr-AMP and then transferred to the acceptor end of tRNA(Tyr).</text>
</comment>
<comment type="catalytic activity">
    <reaction evidence="1">
        <text>tRNA(Tyr) + L-tyrosine + ATP = L-tyrosyl-tRNA(Tyr) + AMP + diphosphate + H(+)</text>
        <dbReference type="Rhea" id="RHEA:10220"/>
        <dbReference type="Rhea" id="RHEA-COMP:9706"/>
        <dbReference type="Rhea" id="RHEA-COMP:9707"/>
        <dbReference type="ChEBI" id="CHEBI:15378"/>
        <dbReference type="ChEBI" id="CHEBI:30616"/>
        <dbReference type="ChEBI" id="CHEBI:33019"/>
        <dbReference type="ChEBI" id="CHEBI:58315"/>
        <dbReference type="ChEBI" id="CHEBI:78442"/>
        <dbReference type="ChEBI" id="CHEBI:78536"/>
        <dbReference type="ChEBI" id="CHEBI:456215"/>
        <dbReference type="EC" id="6.1.1.1"/>
    </reaction>
</comment>
<comment type="subunit">
    <text evidence="1">Homodimer.</text>
</comment>
<comment type="subcellular location">
    <subcellularLocation>
        <location evidence="1">Cytoplasm</location>
    </subcellularLocation>
</comment>
<comment type="similarity">
    <text evidence="1">Belongs to the class-I aminoacyl-tRNA synthetase family. TyrS type 1 subfamily.</text>
</comment>